<reference key="1">
    <citation type="journal article" date="2006" name="Nature">
        <title>Early evolution of the venom system in lizards and snakes.</title>
        <authorList>
            <person name="Fry B.G."/>
            <person name="Vidal N."/>
            <person name="Norman J.A."/>
            <person name="Vonk F.J."/>
            <person name="Scheib H."/>
            <person name="Ramjan S.F.R."/>
            <person name="Kuruppu S."/>
            <person name="Fung K."/>
            <person name="Blair Hedges S."/>
            <person name="Richardson M.K."/>
            <person name="Hodgson W.C."/>
            <person name="Ignjatovic V."/>
            <person name="Summerhayes R."/>
            <person name="Kochva E."/>
        </authorList>
    </citation>
    <scope>NUCLEOTIDE SEQUENCE [LARGE SCALE MRNA]</scope>
    <source>
        <tissue>Venom gland</tissue>
    </source>
</reference>
<sequence length="231" mass="25880">MILLKLYLTLAAILCQSRGMTSLDLDDLMTTNPEIQNEIINKHNDLRRTVDPPAKNMLKMSWDNIIAESAKRAALRCNYKEHTSIAERTIGGVVCGENYFMSSNPRTWSSSIQSWFDERNNFMFGFGPTIPGVMVGHYTQVVWYKSYKVGCAINLCPAQSLKYFQVCQYCPGGNVAGRKYEPYTIGEPCAARPKDCDNGLCTNPCAYNDDYTSCPDLTKQVGCHHPVTANC</sequence>
<keyword id="KW-0108">Calcium channel impairing toxin</keyword>
<keyword id="KW-1015">Disulfide bond</keyword>
<keyword id="KW-0872">Ion channel impairing toxin</keyword>
<keyword id="KW-0528">Neurotoxin</keyword>
<keyword id="KW-0632">Potassium channel impairing toxin</keyword>
<keyword id="KW-0964">Secreted</keyword>
<keyword id="KW-0732">Signal</keyword>
<keyword id="KW-0800">Toxin</keyword>
<proteinExistence type="evidence at transcript level"/>
<feature type="signal peptide" evidence="2">
    <location>
        <begin position="1"/>
        <end position="19"/>
    </location>
</feature>
<feature type="chain" id="PRO_0000380661" description="Cysteine-rich venom protein VAR10">
    <location>
        <begin position="20"/>
        <end position="231" status="greater than"/>
    </location>
</feature>
<feature type="domain" description="SCP">
    <location>
        <begin position="41"/>
        <end position="169"/>
    </location>
</feature>
<feature type="domain" description="ShKT" evidence="3">
    <location>
        <begin position="205"/>
        <end position="231"/>
    </location>
</feature>
<feature type="disulfide bond" evidence="3">
    <location>
        <begin position="77"/>
        <end position="156"/>
    </location>
</feature>
<feature type="disulfide bond" evidence="3">
    <location>
        <begin position="95"/>
        <end position="170"/>
    </location>
</feature>
<feature type="disulfide bond" evidence="3">
    <location>
        <begin position="151"/>
        <end position="167"/>
    </location>
</feature>
<feature type="disulfide bond" evidence="3">
    <location>
        <begin position="189"/>
        <end position="196"/>
    </location>
</feature>
<feature type="disulfide bond" evidence="3">
    <location>
        <begin position="214"/>
        <end position="231"/>
    </location>
</feature>
<feature type="non-terminal residue">
    <location>
        <position position="231"/>
    </location>
</feature>
<organism>
    <name type="scientific">Varanus varius</name>
    <name type="common">Lace monitor lizard</name>
    <name type="synonym">Lacerta varia</name>
    <dbReference type="NCBI Taxonomy" id="8559"/>
    <lineage>
        <taxon>Eukaryota</taxon>
        <taxon>Metazoa</taxon>
        <taxon>Chordata</taxon>
        <taxon>Craniata</taxon>
        <taxon>Vertebrata</taxon>
        <taxon>Euteleostomi</taxon>
        <taxon>Lepidosauria</taxon>
        <taxon>Squamata</taxon>
        <taxon>Bifurcata</taxon>
        <taxon>Unidentata</taxon>
        <taxon>Episquamata</taxon>
        <taxon>Toxicofera</taxon>
        <taxon>Anguimorpha</taxon>
        <taxon>Paleoanguimorpha</taxon>
        <taxon>Varanoidea</taxon>
        <taxon>Varanidae</taxon>
        <taxon>Varanus</taxon>
    </lineage>
</organism>
<comment type="function">
    <text evidence="1">Blocks ryanodine receptors, and potassium channels.</text>
</comment>
<comment type="subcellular location">
    <subcellularLocation>
        <location evidence="1">Secreted</location>
    </subcellularLocation>
</comment>
<comment type="tissue specificity">
    <text>Expressed by the venom gland.</text>
</comment>
<comment type="PTM">
    <text evidence="1">Contains 8 disulfide bonds.</text>
</comment>
<comment type="similarity">
    <text evidence="4">Belongs to the CRISP family.</text>
</comment>
<name>CRVPA_VARVA</name>
<evidence type="ECO:0000250" key="1"/>
<evidence type="ECO:0000255" key="2"/>
<evidence type="ECO:0000255" key="3">
    <source>
        <dbReference type="PROSITE-ProRule" id="PRU01005"/>
    </source>
</evidence>
<evidence type="ECO:0000305" key="4"/>
<protein>
    <recommendedName>
        <fullName>Cysteine-rich venom protein VAR10</fullName>
        <shortName>CRVP</shortName>
    </recommendedName>
    <alternativeName>
        <fullName>Cysteine-rich secretory protein VAR10</fullName>
        <shortName>CRISP-VAR10</shortName>
    </alternativeName>
</protein>
<accession>Q2XXP2</accession>
<dbReference type="EMBL" id="DQ139903">
    <property type="protein sequence ID" value="AAZ75609.1"/>
    <property type="molecule type" value="mRNA"/>
</dbReference>
<dbReference type="SMR" id="Q2XXP2"/>
<dbReference type="GO" id="GO:0005576">
    <property type="term" value="C:extracellular region"/>
    <property type="evidence" value="ECO:0007669"/>
    <property type="project" value="UniProtKB-SubCell"/>
</dbReference>
<dbReference type="GO" id="GO:0005246">
    <property type="term" value="F:calcium channel regulator activity"/>
    <property type="evidence" value="ECO:0007669"/>
    <property type="project" value="UniProtKB-KW"/>
</dbReference>
<dbReference type="GO" id="GO:0015459">
    <property type="term" value="F:potassium channel regulator activity"/>
    <property type="evidence" value="ECO:0007669"/>
    <property type="project" value="UniProtKB-KW"/>
</dbReference>
<dbReference type="GO" id="GO:0090729">
    <property type="term" value="F:toxin activity"/>
    <property type="evidence" value="ECO:0007669"/>
    <property type="project" value="UniProtKB-KW"/>
</dbReference>
<dbReference type="CDD" id="cd05383">
    <property type="entry name" value="CAP_CRISP"/>
    <property type="match status" value="1"/>
</dbReference>
<dbReference type="FunFam" id="3.40.33.10:FF:000005">
    <property type="entry name" value="Cysteine-rich secretory protein 2"/>
    <property type="match status" value="1"/>
</dbReference>
<dbReference type="Gene3D" id="3.40.33.10">
    <property type="entry name" value="CAP"/>
    <property type="match status" value="1"/>
</dbReference>
<dbReference type="Gene3D" id="1.10.10.740">
    <property type="entry name" value="Crisp domain"/>
    <property type="match status" value="1"/>
</dbReference>
<dbReference type="InterPro" id="IPR018244">
    <property type="entry name" value="Allrgn_V5/Tpx1_CS"/>
</dbReference>
<dbReference type="InterPro" id="IPR014044">
    <property type="entry name" value="CAP_dom"/>
</dbReference>
<dbReference type="InterPro" id="IPR035940">
    <property type="entry name" value="CAP_sf"/>
</dbReference>
<dbReference type="InterPro" id="IPR042076">
    <property type="entry name" value="Crisp-like_dom"/>
</dbReference>
<dbReference type="InterPro" id="IPR001283">
    <property type="entry name" value="CRISP-related"/>
</dbReference>
<dbReference type="InterPro" id="IPR013871">
    <property type="entry name" value="Cysteine_rich_secretory"/>
</dbReference>
<dbReference type="InterPro" id="IPR034117">
    <property type="entry name" value="SCP_CRISP"/>
</dbReference>
<dbReference type="InterPro" id="IPR003582">
    <property type="entry name" value="ShKT_dom"/>
</dbReference>
<dbReference type="InterPro" id="IPR002413">
    <property type="entry name" value="V5_allergen-like"/>
</dbReference>
<dbReference type="PANTHER" id="PTHR10334">
    <property type="entry name" value="CYSTEINE-RICH SECRETORY PROTEIN-RELATED"/>
    <property type="match status" value="1"/>
</dbReference>
<dbReference type="Pfam" id="PF00188">
    <property type="entry name" value="CAP"/>
    <property type="match status" value="1"/>
</dbReference>
<dbReference type="Pfam" id="PF08562">
    <property type="entry name" value="Crisp"/>
    <property type="match status" value="1"/>
</dbReference>
<dbReference type="PRINTS" id="PR00838">
    <property type="entry name" value="V5ALLERGEN"/>
</dbReference>
<dbReference type="PRINTS" id="PR00837">
    <property type="entry name" value="V5TPXLIKE"/>
</dbReference>
<dbReference type="SMART" id="SM00198">
    <property type="entry name" value="SCP"/>
    <property type="match status" value="1"/>
</dbReference>
<dbReference type="SUPFAM" id="SSF57546">
    <property type="entry name" value="Crisp domain-like"/>
    <property type="match status" value="1"/>
</dbReference>
<dbReference type="SUPFAM" id="SSF55797">
    <property type="entry name" value="PR-1-like"/>
    <property type="match status" value="1"/>
</dbReference>
<dbReference type="PROSITE" id="PS01009">
    <property type="entry name" value="CRISP_1"/>
    <property type="match status" value="1"/>
</dbReference>
<dbReference type="PROSITE" id="PS51670">
    <property type="entry name" value="SHKT"/>
    <property type="match status" value="1"/>
</dbReference>